<accession>A1X8C6</accession>
<keyword id="KW-0008">Acetylcholine receptor inhibiting toxin</keyword>
<keyword id="KW-1015">Disulfide bond</keyword>
<keyword id="KW-0872">Ion channel impairing toxin</keyword>
<keyword id="KW-0528">Neurotoxin</keyword>
<keyword id="KW-0629">Postsynaptic neurotoxin</keyword>
<keyword id="KW-0964">Secreted</keyword>
<keyword id="KW-0800">Toxin</keyword>
<dbReference type="EMBL" id="DQ311066">
    <property type="protein sequence ID" value="ABD33858.1"/>
    <property type="molecule type" value="Genomic_DNA"/>
</dbReference>
<dbReference type="ConoServer" id="556">
    <property type="toxin name" value="Qc1.1c precursor"/>
</dbReference>
<dbReference type="GO" id="GO:0005576">
    <property type="term" value="C:extracellular region"/>
    <property type="evidence" value="ECO:0007669"/>
    <property type="project" value="UniProtKB-SubCell"/>
</dbReference>
<dbReference type="GO" id="GO:0035792">
    <property type="term" value="C:host cell postsynaptic membrane"/>
    <property type="evidence" value="ECO:0007669"/>
    <property type="project" value="UniProtKB-KW"/>
</dbReference>
<dbReference type="GO" id="GO:0030550">
    <property type="term" value="F:acetylcholine receptor inhibitor activity"/>
    <property type="evidence" value="ECO:0007669"/>
    <property type="project" value="UniProtKB-KW"/>
</dbReference>
<dbReference type="GO" id="GO:0099106">
    <property type="term" value="F:ion channel regulator activity"/>
    <property type="evidence" value="ECO:0007669"/>
    <property type="project" value="UniProtKB-KW"/>
</dbReference>
<dbReference type="GO" id="GO:0090729">
    <property type="term" value="F:toxin activity"/>
    <property type="evidence" value="ECO:0007669"/>
    <property type="project" value="UniProtKB-KW"/>
</dbReference>
<dbReference type="InterPro" id="IPR009958">
    <property type="entry name" value="Conotoxin_a-typ"/>
</dbReference>
<dbReference type="Pfam" id="PF07365">
    <property type="entry name" value="Toxin_8"/>
    <property type="match status" value="1"/>
</dbReference>
<sequence length="40" mass="4324">SDGRNTAANDKASNLMALRDDCCPNPPCKASNPDLCDWRS</sequence>
<name>CA11C_CONQU</name>
<feature type="propeptide" id="PRO_0000380614" evidence="1">
    <location>
        <begin position="1" status="less than"/>
        <end position="19"/>
    </location>
</feature>
<feature type="peptide" id="PRO_0000380615" description="Alpha-conotoxin-like Qc1.1c">
    <location>
        <begin position="20"/>
        <end position="40"/>
    </location>
</feature>
<feature type="region of interest" description="Lacks the Ser-Xaa-Pro motif that is crucial for potent interaction with nAChR" evidence="4">
    <location>
        <begin position="24"/>
        <end position="26"/>
    </location>
</feature>
<feature type="disulfide bond" evidence="2">
    <location>
        <begin position="22"/>
        <end position="28"/>
    </location>
</feature>
<feature type="disulfide bond" evidence="2">
    <location>
        <begin position="23"/>
        <end position="36"/>
    </location>
</feature>
<feature type="non-terminal residue">
    <location>
        <position position="1"/>
    </location>
</feature>
<proteinExistence type="inferred from homology"/>
<organism>
    <name type="scientific">Conus quercinus</name>
    <name type="common">Oak cone</name>
    <dbReference type="NCBI Taxonomy" id="101313"/>
    <lineage>
        <taxon>Eukaryota</taxon>
        <taxon>Metazoa</taxon>
        <taxon>Spiralia</taxon>
        <taxon>Lophotrochozoa</taxon>
        <taxon>Mollusca</taxon>
        <taxon>Gastropoda</taxon>
        <taxon>Caenogastropoda</taxon>
        <taxon>Neogastropoda</taxon>
        <taxon>Conoidea</taxon>
        <taxon>Conidae</taxon>
        <taxon>Conus</taxon>
        <taxon>Lividoconus</taxon>
    </lineage>
</organism>
<protein>
    <recommendedName>
        <fullName>Alpha-conotoxin-like Qc1.1c</fullName>
    </recommendedName>
</protein>
<evidence type="ECO:0000250" key="1"/>
<evidence type="ECO:0000250" key="2">
    <source>
        <dbReference type="UniProtKB" id="P56636"/>
    </source>
</evidence>
<evidence type="ECO:0000250" key="3">
    <source>
        <dbReference type="UniProtKB" id="Q2I2R8"/>
    </source>
</evidence>
<evidence type="ECO:0000305" key="4"/>
<reference key="1">
    <citation type="journal article" date="2007" name="Toxicon">
        <title>From the identification of gene organization of alpha conotoxins to the cloning of novel toxins.</title>
        <authorList>
            <person name="Yuan D.-D."/>
            <person name="Han Y.-H."/>
            <person name="Wang C.-G."/>
            <person name="Chi C.-W."/>
        </authorList>
    </citation>
    <scope>NUCLEOTIDE SEQUENCE [GENOMIC DNA]</scope>
</reference>
<comment type="function">
    <text evidence="3">Alpha-conotoxins act on postsynaptic membranes, they bind to the nicotinic acetylcholine receptors (nAChR) and thus inhibit them (By similarity). Has possibly a distinct nAChR binding mode from other alpha-conotoxins, due to a different three residue motif (lacks the Ser-Xaa-Pro motif) (By similarity).</text>
</comment>
<comment type="subcellular location">
    <subcellularLocation>
        <location evidence="4">Secreted</location>
    </subcellularLocation>
</comment>
<comment type="tissue specificity">
    <text evidence="4">Expressed by the venom duct.</text>
</comment>
<comment type="domain">
    <text evidence="4">The cysteine framework is I (CC-C-C). Alpha4/7 pattern.</text>
</comment>
<comment type="similarity">
    <text evidence="4">Belongs to the conotoxin A superfamily.</text>
</comment>